<name>AATC_PONAB</name>
<dbReference type="EC" id="2.6.1.1" evidence="2"/>
<dbReference type="EC" id="2.6.1.3" evidence="2"/>
<dbReference type="EMBL" id="CR860603">
    <property type="protein sequence ID" value="CAH92725.1"/>
    <property type="molecule type" value="mRNA"/>
</dbReference>
<dbReference type="EMBL" id="CR861057">
    <property type="protein sequence ID" value="CAH93142.1"/>
    <property type="molecule type" value="mRNA"/>
</dbReference>
<dbReference type="RefSeq" id="NP_001128921.2">
    <property type="nucleotide sequence ID" value="NM_001135449.2"/>
</dbReference>
<dbReference type="SMR" id="Q5R691"/>
<dbReference type="FunCoup" id="Q5R691">
    <property type="interactions" value="2114"/>
</dbReference>
<dbReference type="STRING" id="9601.ENSPPYP00000002962"/>
<dbReference type="Ensembl" id="ENSPPYT00000003065.3">
    <property type="protein sequence ID" value="ENSPPYP00000002962.3"/>
    <property type="gene ID" value="ENSPPYG00000002552.3"/>
</dbReference>
<dbReference type="GeneID" id="100173864"/>
<dbReference type="KEGG" id="pon:100173864"/>
<dbReference type="CTD" id="2805"/>
<dbReference type="GeneTree" id="ENSGT00950000183082"/>
<dbReference type="InParanoid" id="Q5R691"/>
<dbReference type="OMA" id="GTWTHIT"/>
<dbReference type="OrthoDB" id="6752799at2759"/>
<dbReference type="Proteomes" id="UP000001595">
    <property type="component" value="Chromosome 10"/>
</dbReference>
<dbReference type="GO" id="GO:0005829">
    <property type="term" value="C:cytosol"/>
    <property type="evidence" value="ECO:0007669"/>
    <property type="project" value="Ensembl"/>
</dbReference>
<dbReference type="GO" id="GO:0004069">
    <property type="term" value="F:L-aspartate:2-oxoglutarate aminotransferase activity"/>
    <property type="evidence" value="ECO:0000250"/>
    <property type="project" value="UniProtKB"/>
</dbReference>
<dbReference type="GO" id="GO:0047801">
    <property type="term" value="F:L-cysteine transaminase activity"/>
    <property type="evidence" value="ECO:0000250"/>
    <property type="project" value="UniProtKB"/>
</dbReference>
<dbReference type="GO" id="GO:0004609">
    <property type="term" value="F:phosphatidylserine decarboxylase activity"/>
    <property type="evidence" value="ECO:0007669"/>
    <property type="project" value="Ensembl"/>
</dbReference>
<dbReference type="GO" id="GO:0030170">
    <property type="term" value="F:pyridoxal phosphate binding"/>
    <property type="evidence" value="ECO:0007669"/>
    <property type="project" value="InterPro"/>
</dbReference>
<dbReference type="GO" id="GO:0006103">
    <property type="term" value="P:2-oxoglutarate metabolic process"/>
    <property type="evidence" value="ECO:0000250"/>
    <property type="project" value="UniProtKB"/>
</dbReference>
<dbReference type="GO" id="GO:0006532">
    <property type="term" value="P:aspartate biosynthetic process"/>
    <property type="evidence" value="ECO:0007669"/>
    <property type="project" value="Ensembl"/>
</dbReference>
<dbReference type="GO" id="GO:0006533">
    <property type="term" value="P:aspartate catabolic process"/>
    <property type="evidence" value="ECO:0007669"/>
    <property type="project" value="Ensembl"/>
</dbReference>
<dbReference type="GO" id="GO:0006531">
    <property type="term" value="P:aspartate metabolic process"/>
    <property type="evidence" value="ECO:0000250"/>
    <property type="project" value="UniProtKB"/>
</dbReference>
<dbReference type="GO" id="GO:0032869">
    <property type="term" value="P:cellular response to insulin stimulus"/>
    <property type="evidence" value="ECO:0007669"/>
    <property type="project" value="Ensembl"/>
</dbReference>
<dbReference type="GO" id="GO:0055089">
    <property type="term" value="P:fatty acid homeostasis"/>
    <property type="evidence" value="ECO:0007669"/>
    <property type="project" value="Ensembl"/>
</dbReference>
<dbReference type="GO" id="GO:0006094">
    <property type="term" value="P:gluconeogenesis"/>
    <property type="evidence" value="ECO:0007669"/>
    <property type="project" value="Ensembl"/>
</dbReference>
<dbReference type="GO" id="GO:0019550">
    <property type="term" value="P:glutamate catabolic process to aspartate"/>
    <property type="evidence" value="ECO:0007669"/>
    <property type="project" value="Ensembl"/>
</dbReference>
<dbReference type="GO" id="GO:0006536">
    <property type="term" value="P:glutamate metabolic process"/>
    <property type="evidence" value="ECO:0000250"/>
    <property type="project" value="UniProtKB"/>
</dbReference>
<dbReference type="GO" id="GO:0006114">
    <property type="term" value="P:glycerol biosynthetic process"/>
    <property type="evidence" value="ECO:0000250"/>
    <property type="project" value="UniProtKB"/>
</dbReference>
<dbReference type="GO" id="GO:0043490">
    <property type="term" value="P:malate-aspartate shuttle"/>
    <property type="evidence" value="ECO:0007669"/>
    <property type="project" value="Ensembl"/>
</dbReference>
<dbReference type="GO" id="GO:0007219">
    <property type="term" value="P:Notch signaling pathway"/>
    <property type="evidence" value="ECO:0007669"/>
    <property type="project" value="Ensembl"/>
</dbReference>
<dbReference type="GO" id="GO:0006107">
    <property type="term" value="P:oxaloacetate metabolic process"/>
    <property type="evidence" value="ECO:0007669"/>
    <property type="project" value="Ensembl"/>
</dbReference>
<dbReference type="GO" id="GO:0051384">
    <property type="term" value="P:response to glucocorticoid"/>
    <property type="evidence" value="ECO:0007669"/>
    <property type="project" value="Ensembl"/>
</dbReference>
<dbReference type="CDD" id="cd00609">
    <property type="entry name" value="AAT_like"/>
    <property type="match status" value="1"/>
</dbReference>
<dbReference type="FunFam" id="3.40.640.10:FF:000044">
    <property type="entry name" value="Aspartate aminotransferase"/>
    <property type="match status" value="1"/>
</dbReference>
<dbReference type="FunFam" id="3.90.1150.10:FF:000001">
    <property type="entry name" value="Aspartate aminotransferase"/>
    <property type="match status" value="1"/>
</dbReference>
<dbReference type="Gene3D" id="3.90.1150.10">
    <property type="entry name" value="Aspartate Aminotransferase, domain 1"/>
    <property type="match status" value="1"/>
</dbReference>
<dbReference type="Gene3D" id="3.40.640.10">
    <property type="entry name" value="Type I PLP-dependent aspartate aminotransferase-like (Major domain)"/>
    <property type="match status" value="1"/>
</dbReference>
<dbReference type="InterPro" id="IPR004839">
    <property type="entry name" value="Aminotransferase_I/II_large"/>
</dbReference>
<dbReference type="InterPro" id="IPR000796">
    <property type="entry name" value="Asp_trans"/>
</dbReference>
<dbReference type="InterPro" id="IPR004838">
    <property type="entry name" value="NHTrfase_class1_PyrdxlP-BS"/>
</dbReference>
<dbReference type="InterPro" id="IPR015424">
    <property type="entry name" value="PyrdxlP-dep_Trfase"/>
</dbReference>
<dbReference type="InterPro" id="IPR015421">
    <property type="entry name" value="PyrdxlP-dep_Trfase_major"/>
</dbReference>
<dbReference type="InterPro" id="IPR015422">
    <property type="entry name" value="PyrdxlP-dep_Trfase_small"/>
</dbReference>
<dbReference type="NCBIfam" id="NF006719">
    <property type="entry name" value="PRK09257.1"/>
    <property type="match status" value="1"/>
</dbReference>
<dbReference type="PANTHER" id="PTHR11879">
    <property type="entry name" value="ASPARTATE AMINOTRANSFERASE"/>
    <property type="match status" value="1"/>
</dbReference>
<dbReference type="PANTHER" id="PTHR11879:SF3">
    <property type="entry name" value="ASPARTATE AMINOTRANSFERASE, CYTOPLASMIC"/>
    <property type="match status" value="1"/>
</dbReference>
<dbReference type="Pfam" id="PF00155">
    <property type="entry name" value="Aminotran_1_2"/>
    <property type="match status" value="1"/>
</dbReference>
<dbReference type="PRINTS" id="PR00799">
    <property type="entry name" value="TRANSAMINASE"/>
</dbReference>
<dbReference type="SUPFAM" id="SSF53383">
    <property type="entry name" value="PLP-dependent transferases"/>
    <property type="match status" value="1"/>
</dbReference>
<dbReference type="PROSITE" id="PS00105">
    <property type="entry name" value="AA_TRANSFER_CLASS_1"/>
    <property type="match status" value="1"/>
</dbReference>
<feature type="chain" id="PRO_0000278663" description="Aspartate aminotransferase, cytoplasmic">
    <location>
        <begin position="1"/>
        <end position="413"/>
    </location>
</feature>
<feature type="binding site">
    <location>
        <position position="39"/>
    </location>
    <ligand>
        <name>L-aspartate</name>
        <dbReference type="ChEBI" id="CHEBI:29991"/>
    </ligand>
</feature>
<feature type="binding site" evidence="1">
    <location>
        <position position="141"/>
    </location>
    <ligand>
        <name>L-aspartate</name>
        <dbReference type="ChEBI" id="CHEBI:29991"/>
    </ligand>
</feature>
<feature type="binding site" evidence="1">
    <location>
        <position position="195"/>
    </location>
    <ligand>
        <name>L-aspartate</name>
        <dbReference type="ChEBI" id="CHEBI:29991"/>
    </ligand>
</feature>
<feature type="binding site" evidence="1">
    <location>
        <position position="387"/>
    </location>
    <ligand>
        <name>L-aspartate</name>
        <dbReference type="ChEBI" id="CHEBI:29991"/>
    </ligand>
</feature>
<feature type="modified residue" description="Phosphoserine" evidence="2">
    <location>
        <position position="149"/>
    </location>
</feature>
<feature type="modified residue" description="N6-(pyridoxal phosphate)lysine" evidence="1">
    <location>
        <position position="259"/>
    </location>
</feature>
<feature type="sequence conflict" description="In Ref. 1; CAH93142." evidence="4" ref="1">
    <original>N</original>
    <variation>D</variation>
    <location>
        <position position="298"/>
    </location>
</feature>
<evidence type="ECO:0000250" key="1"/>
<evidence type="ECO:0000250" key="2">
    <source>
        <dbReference type="UniProtKB" id="P13221"/>
    </source>
</evidence>
<evidence type="ECO:0000250" key="3">
    <source>
        <dbReference type="UniProtKB" id="P17174"/>
    </source>
</evidence>
<evidence type="ECO:0000305" key="4"/>
<accession>Q5R691</accession>
<accession>Q5R524</accession>
<gene>
    <name evidence="3" type="primary">GOT1</name>
</gene>
<sequence length="413" mass="46213">MAPPSVFAEVPQAQPVLVFKLTADFREDPDPRKVNLGVGAYRTDDCHPWVLPVVKKVEQKIANDNSLNHEYLPILGLAEFRSCASRLALGDDSPALKEKRVGGVQSLGGTGALRIGADFLARWYNGTNNKNTPVYVSSPTWENHNAVFSAAGFKDIRSYRYWDAEKRGLDLQGLLNDLENAPEFSIVVLHACAHNPTGTDPTPEQWKQIASVMKHRFLFPFFDSAYQGFASGNLERDAWAIRYFVSEGFEFFCAQSFSKNFGLYNERVGNLTVVGKEPEGILRVLSQMEKIVRITWSNPPAQGARIVASTLSNPELFEEWTGNVKTMADRILTMRSELRARLEALKTPGTWNHITDQIGMFSFTGLNPKQVEYLINEKHIYLLPSGRINVSGLTTKNLDYVATSIHEAVTKIQ</sequence>
<keyword id="KW-0028">Amino-acid biosynthesis</keyword>
<keyword id="KW-0032">Aminotransferase</keyword>
<keyword id="KW-0963">Cytoplasm</keyword>
<keyword id="KW-0597">Phosphoprotein</keyword>
<keyword id="KW-0663">Pyridoxal phosphate</keyword>
<keyword id="KW-1185">Reference proteome</keyword>
<keyword id="KW-0808">Transferase</keyword>
<protein>
    <recommendedName>
        <fullName evidence="3">Aspartate aminotransferase, cytoplasmic</fullName>
        <shortName>cAspAT</shortName>
        <ecNumber evidence="2">2.6.1.1</ecNumber>
        <ecNumber evidence="2">2.6.1.3</ecNumber>
    </recommendedName>
    <alternativeName>
        <fullName>Cysteine aminotransferase, cytoplasmic</fullName>
    </alternativeName>
    <alternativeName>
        <fullName>Cysteine transaminase, cytoplasmic</fullName>
        <shortName>cCAT</shortName>
    </alternativeName>
    <alternativeName>
        <fullName>Glutamate oxaloacetate transaminase 1</fullName>
    </alternativeName>
    <alternativeName>
        <fullName>Transaminase A</fullName>
    </alternativeName>
</protein>
<comment type="function">
    <text evidence="2">Biosynthesis of L-glutamate from L-aspartate or L-cysteine. Important regulator of levels of glutamate, the major excitatory neurotransmitter of the vertebrate central nervous system. Acts as a scavenger of glutamate in brain neuroprotection. The aspartate aminotransferase activity is involved in hepatic glucose synthesis during development and in adipocyte glyceroneogenesis. Using L-cysteine as substrate, regulates levels of mercaptopyruvate, an important source of hydrogen sulfide. Mercaptopyruvate is converted into H(2)S via the action of 3-mercaptopyruvate sulfurtransferase (3MST). Hydrogen sulfide is an important synaptic modulator and neuroprotectant in the brain.</text>
</comment>
<comment type="catalytic activity">
    <reaction evidence="2">
        <text>L-aspartate + 2-oxoglutarate = oxaloacetate + L-glutamate</text>
        <dbReference type="Rhea" id="RHEA:21824"/>
        <dbReference type="ChEBI" id="CHEBI:16452"/>
        <dbReference type="ChEBI" id="CHEBI:16810"/>
        <dbReference type="ChEBI" id="CHEBI:29985"/>
        <dbReference type="ChEBI" id="CHEBI:29991"/>
        <dbReference type="EC" id="2.6.1.1"/>
    </reaction>
    <physiologicalReaction direction="left-to-right" evidence="2">
        <dbReference type="Rhea" id="RHEA:21825"/>
    </physiologicalReaction>
</comment>
<comment type="catalytic activity">
    <reaction evidence="2">
        <text>L-cysteine + 2-oxoglutarate = 2-oxo-3-sulfanylpropanoate + L-glutamate</text>
        <dbReference type="Rhea" id="RHEA:17441"/>
        <dbReference type="ChEBI" id="CHEBI:16810"/>
        <dbReference type="ChEBI" id="CHEBI:29985"/>
        <dbReference type="ChEBI" id="CHEBI:35235"/>
        <dbReference type="ChEBI" id="CHEBI:57678"/>
        <dbReference type="EC" id="2.6.1.3"/>
    </reaction>
    <physiologicalReaction direction="left-to-right" evidence="2">
        <dbReference type="Rhea" id="RHEA:17442"/>
    </physiologicalReaction>
</comment>
<comment type="catalytic activity">
    <reaction evidence="3">
        <text>(2S)-2-aminobutanoate + 2-oxoglutarate = 2-oxobutanoate + L-glutamate</text>
        <dbReference type="Rhea" id="RHEA:70223"/>
        <dbReference type="ChEBI" id="CHEBI:16763"/>
        <dbReference type="ChEBI" id="CHEBI:16810"/>
        <dbReference type="ChEBI" id="CHEBI:29985"/>
        <dbReference type="ChEBI" id="CHEBI:74359"/>
    </reaction>
    <physiologicalReaction direction="right-to-left" evidence="3">
        <dbReference type="Rhea" id="RHEA:70225"/>
    </physiologicalReaction>
</comment>
<comment type="catalytic activity">
    <reaction evidence="2">
        <text>3-sulfino-L-alanine + 2-oxoglutarate = 3-sulfinopyruvate + L-glutamate</text>
        <dbReference type="Rhea" id="RHEA:70295"/>
        <dbReference type="ChEBI" id="CHEBI:16810"/>
        <dbReference type="ChEBI" id="CHEBI:29985"/>
        <dbReference type="ChEBI" id="CHEBI:61085"/>
        <dbReference type="ChEBI" id="CHEBI:140699"/>
    </reaction>
    <physiologicalReaction direction="right-to-left" evidence="2">
        <dbReference type="Rhea" id="RHEA:70297"/>
    </physiologicalReaction>
</comment>
<comment type="cofactor">
    <cofactor evidence="1">
        <name>pyridoxal 5'-phosphate</name>
        <dbReference type="ChEBI" id="CHEBI:597326"/>
    </cofactor>
</comment>
<comment type="subunit">
    <text evidence="1">Homodimer.</text>
</comment>
<comment type="subcellular location">
    <subcellularLocation>
        <location evidence="1">Cytoplasm</location>
    </subcellularLocation>
</comment>
<comment type="miscellaneous">
    <text>In eukaryotes there are cytoplasmic, mitochondrial and chloroplastic isozymes.</text>
</comment>
<comment type="similarity">
    <text evidence="4">Belongs to the class-I pyridoxal-phosphate-dependent aminotransferase family.</text>
</comment>
<proteinExistence type="evidence at transcript level"/>
<organism>
    <name type="scientific">Pongo abelii</name>
    <name type="common">Sumatran orangutan</name>
    <name type="synonym">Pongo pygmaeus abelii</name>
    <dbReference type="NCBI Taxonomy" id="9601"/>
    <lineage>
        <taxon>Eukaryota</taxon>
        <taxon>Metazoa</taxon>
        <taxon>Chordata</taxon>
        <taxon>Craniata</taxon>
        <taxon>Vertebrata</taxon>
        <taxon>Euteleostomi</taxon>
        <taxon>Mammalia</taxon>
        <taxon>Eutheria</taxon>
        <taxon>Euarchontoglires</taxon>
        <taxon>Primates</taxon>
        <taxon>Haplorrhini</taxon>
        <taxon>Catarrhini</taxon>
        <taxon>Hominidae</taxon>
        <taxon>Pongo</taxon>
    </lineage>
</organism>
<reference key="1">
    <citation type="submission" date="2004-11" db="EMBL/GenBank/DDBJ databases">
        <authorList>
            <consortium name="The German cDNA consortium"/>
        </authorList>
    </citation>
    <scope>NUCLEOTIDE SEQUENCE [LARGE SCALE MRNA]</scope>
    <source>
        <tissue>Brain cortex</tissue>
    </source>
</reference>